<gene>
    <name evidence="1" type="primary">ligB</name>
    <name type="ordered locus">ESA_04079</name>
</gene>
<dbReference type="EC" id="6.5.1.2" evidence="1"/>
<dbReference type="EMBL" id="CP000783">
    <property type="protein sequence ID" value="ABU79260.1"/>
    <property type="molecule type" value="Genomic_DNA"/>
</dbReference>
<dbReference type="RefSeq" id="WP_012126235.1">
    <property type="nucleotide sequence ID" value="NC_009778.1"/>
</dbReference>
<dbReference type="SMR" id="A7MQB5"/>
<dbReference type="KEGG" id="esa:ESA_04079"/>
<dbReference type="PATRIC" id="fig|290339.8.peg.3624"/>
<dbReference type="HOGENOM" id="CLU_489786_0_0_6"/>
<dbReference type="Proteomes" id="UP000000260">
    <property type="component" value="Chromosome"/>
</dbReference>
<dbReference type="GO" id="GO:0003911">
    <property type="term" value="F:DNA ligase (NAD+) activity"/>
    <property type="evidence" value="ECO:0007669"/>
    <property type="project" value="UniProtKB-UniRule"/>
</dbReference>
<dbReference type="GO" id="GO:0006281">
    <property type="term" value="P:DNA repair"/>
    <property type="evidence" value="ECO:0007669"/>
    <property type="project" value="UniProtKB-KW"/>
</dbReference>
<dbReference type="GO" id="GO:0006260">
    <property type="term" value="P:DNA replication"/>
    <property type="evidence" value="ECO:0007669"/>
    <property type="project" value="UniProtKB-KW"/>
</dbReference>
<dbReference type="Gene3D" id="1.10.150.20">
    <property type="entry name" value="5' to 3' exonuclease, C-terminal subdomain"/>
    <property type="match status" value="1"/>
</dbReference>
<dbReference type="Gene3D" id="3.30.470.30">
    <property type="entry name" value="DNA ligase/mRNA capping enzyme"/>
    <property type="match status" value="1"/>
</dbReference>
<dbReference type="Gene3D" id="1.10.287.610">
    <property type="entry name" value="Helix hairpin bin"/>
    <property type="match status" value="1"/>
</dbReference>
<dbReference type="Gene3D" id="2.40.50.140">
    <property type="entry name" value="Nucleic acid-binding proteins"/>
    <property type="match status" value="1"/>
</dbReference>
<dbReference type="HAMAP" id="MF_01587">
    <property type="entry name" value="DNA_ligase_B"/>
    <property type="match status" value="1"/>
</dbReference>
<dbReference type="InterPro" id="IPR018239">
    <property type="entry name" value="DNA_ligase_AS"/>
</dbReference>
<dbReference type="InterPro" id="IPR020923">
    <property type="entry name" value="DNA_ligase_B"/>
</dbReference>
<dbReference type="InterPro" id="IPR033136">
    <property type="entry name" value="DNA_ligase_CS"/>
</dbReference>
<dbReference type="InterPro" id="IPR013839">
    <property type="entry name" value="DNAligase_adenylation"/>
</dbReference>
<dbReference type="InterPro" id="IPR013840">
    <property type="entry name" value="DNAligase_N"/>
</dbReference>
<dbReference type="InterPro" id="IPR012340">
    <property type="entry name" value="NA-bd_OB-fold"/>
</dbReference>
<dbReference type="InterPro" id="IPR050326">
    <property type="entry name" value="NAD_dep_DNA_ligaseB"/>
</dbReference>
<dbReference type="InterPro" id="IPR004150">
    <property type="entry name" value="NAD_DNA_ligase_OB"/>
</dbReference>
<dbReference type="InterPro" id="IPR010994">
    <property type="entry name" value="RuvA_2-like"/>
</dbReference>
<dbReference type="NCBIfam" id="NF005987">
    <property type="entry name" value="PRK08097.1"/>
    <property type="match status" value="1"/>
</dbReference>
<dbReference type="PANTHER" id="PTHR47810">
    <property type="entry name" value="DNA LIGASE"/>
    <property type="match status" value="1"/>
</dbReference>
<dbReference type="PANTHER" id="PTHR47810:SF1">
    <property type="entry name" value="DNA LIGASE B"/>
    <property type="match status" value="1"/>
</dbReference>
<dbReference type="Pfam" id="PF01653">
    <property type="entry name" value="DNA_ligase_aden"/>
    <property type="match status" value="1"/>
</dbReference>
<dbReference type="Pfam" id="PF03120">
    <property type="entry name" value="DNA_ligase_OB"/>
    <property type="match status" value="1"/>
</dbReference>
<dbReference type="SMART" id="SM00532">
    <property type="entry name" value="LIGANc"/>
    <property type="match status" value="1"/>
</dbReference>
<dbReference type="SUPFAM" id="SSF56091">
    <property type="entry name" value="DNA ligase/mRNA capping enzyme, catalytic domain"/>
    <property type="match status" value="1"/>
</dbReference>
<dbReference type="SUPFAM" id="SSF50249">
    <property type="entry name" value="Nucleic acid-binding proteins"/>
    <property type="match status" value="1"/>
</dbReference>
<dbReference type="SUPFAM" id="SSF47781">
    <property type="entry name" value="RuvA domain 2-like"/>
    <property type="match status" value="1"/>
</dbReference>
<dbReference type="PROSITE" id="PS01055">
    <property type="entry name" value="DNA_LIGASE_N1"/>
    <property type="match status" value="1"/>
</dbReference>
<dbReference type="PROSITE" id="PS01056">
    <property type="entry name" value="DNA_LIGASE_N2"/>
    <property type="match status" value="1"/>
</dbReference>
<evidence type="ECO:0000255" key="1">
    <source>
        <dbReference type="HAMAP-Rule" id="MF_01587"/>
    </source>
</evidence>
<comment type="function">
    <text evidence="1">Catalyzes the formation of phosphodiester linkages between 5'-phosphoryl and 3'-hydroxyl groups in double-stranded DNA using NAD as a coenzyme and as the energy source for the reaction.</text>
</comment>
<comment type="catalytic activity">
    <reaction evidence="1">
        <text>NAD(+) + (deoxyribonucleotide)n-3'-hydroxyl + 5'-phospho-(deoxyribonucleotide)m = (deoxyribonucleotide)n+m + AMP + beta-nicotinamide D-nucleotide.</text>
        <dbReference type="EC" id="6.5.1.2"/>
    </reaction>
</comment>
<comment type="similarity">
    <text evidence="1">Belongs to the NAD-dependent DNA ligase family. LigB subfamily.</text>
</comment>
<name>LIGB_CROS8</name>
<keyword id="KW-0227">DNA damage</keyword>
<keyword id="KW-0234">DNA repair</keyword>
<keyword id="KW-0235">DNA replication</keyword>
<keyword id="KW-0436">Ligase</keyword>
<keyword id="KW-0520">NAD</keyword>
<keyword id="KW-1185">Reference proteome</keyword>
<feature type="chain" id="PRO_0000313535" description="DNA ligase B">
    <location>
        <begin position="1"/>
        <end position="561"/>
    </location>
</feature>
<feature type="active site" description="N6-AMP-lysine intermediate" evidence="1">
    <location>
        <position position="124"/>
    </location>
</feature>
<reference key="1">
    <citation type="journal article" date="2010" name="PLoS ONE">
        <title>Genome sequence of Cronobacter sakazakii BAA-894 and comparative genomic hybridization analysis with other Cronobacter species.</title>
        <authorList>
            <person name="Kucerova E."/>
            <person name="Clifton S.W."/>
            <person name="Xia X.Q."/>
            <person name="Long F."/>
            <person name="Porwollik S."/>
            <person name="Fulton L."/>
            <person name="Fronick C."/>
            <person name="Minx P."/>
            <person name="Kyung K."/>
            <person name="Warren W."/>
            <person name="Fulton R."/>
            <person name="Feng D."/>
            <person name="Wollam A."/>
            <person name="Shah N."/>
            <person name="Bhonagiri V."/>
            <person name="Nash W.E."/>
            <person name="Hallsworth-Pepin K."/>
            <person name="Wilson R.K."/>
            <person name="McClelland M."/>
            <person name="Forsythe S.J."/>
        </authorList>
    </citation>
    <scope>NUCLEOTIDE SEQUENCE [LARGE SCALE GENOMIC DNA]</scope>
    <source>
        <strain>ATCC BAA-894</strain>
    </source>
</reference>
<accession>A7MQB5</accession>
<proteinExistence type="inferred from homology"/>
<protein>
    <recommendedName>
        <fullName evidence="1">DNA ligase B</fullName>
        <ecNumber evidence="1">6.5.1.2</ecNumber>
    </recommendedName>
    <alternativeName>
        <fullName evidence="1">Polydeoxyribonucleotide synthase [NAD(+)] B</fullName>
    </alternativeName>
</protein>
<organism>
    <name type="scientific">Cronobacter sakazakii (strain ATCC BAA-894)</name>
    <name type="common">Enterobacter sakazakii</name>
    <dbReference type="NCBI Taxonomy" id="290339"/>
    <lineage>
        <taxon>Bacteria</taxon>
        <taxon>Pseudomonadati</taxon>
        <taxon>Pseudomonadota</taxon>
        <taxon>Gammaproteobacteria</taxon>
        <taxon>Enterobacterales</taxon>
        <taxon>Enterobacteriaceae</taxon>
        <taxon>Cronobacter</taxon>
    </lineage>
</organism>
<sequence>MRITIFLLLIILASAGAYAACPDWTPQQAQQEVAALENQLTRWDEAYWLHGENKVSDAVYDSMRQRLRAWQTCFALPVFNDAPVALAAGRTRHPVAHTGVQKLNDATSLSQWMHGKTDLWVQPKVDGVAVSLVYRKGKLQQVISRGDGERGEDWTARARHIPAIPLQVTGELADSVLQGELFLRQTGHRQQQDGGINARGQVAGAMMRSTVSSVLNDLDLFIWAWPDGPKAMEARLSTLAEGGFPLAQAWSKPVHSVSDVARLREQWFSEPLPFVTDGVVIREGREPPGKSWRPGEGSWVVAWKYPPAKQITEIKALRFAVGRTGKISVVAQLEPVTLDDKKVSKVSIGSLARWEKLDLAEGDQVEISLAGQGIPRLDAVIWRPTQRIKPVPPTARFDTLSCLYGTTGCEEQFISRLVWLSGKHVFDLAGMGEATWRQLSEHHHFEHLFSWLALSVDALKQTPGFSAQRAAQLWHQFNLTRQQPFQRWVKALGLPLPARDWQALTDDKWQQLQARDERSWQTLPGVGAERARQLVSYIHHPDIAALAEWLAAQRIDGFALP</sequence>